<feature type="chain" id="PRO_0000072834" description="Glycine--tRNA ligase alpha subunit">
    <location>
        <begin position="1"/>
        <end position="299"/>
    </location>
</feature>
<keyword id="KW-0030">Aminoacyl-tRNA synthetase</keyword>
<keyword id="KW-0067">ATP-binding</keyword>
<keyword id="KW-0963">Cytoplasm</keyword>
<keyword id="KW-0436">Ligase</keyword>
<keyword id="KW-0547">Nucleotide-binding</keyword>
<keyword id="KW-0648">Protein biosynthesis</keyword>
<keyword id="KW-1185">Reference proteome</keyword>
<name>SYGA_CAUVC</name>
<protein>
    <recommendedName>
        <fullName evidence="1">Glycine--tRNA ligase alpha subunit</fullName>
        <ecNumber evidence="1">6.1.1.14</ecNumber>
    </recommendedName>
    <alternativeName>
        <fullName evidence="1">Glycyl-tRNA synthetase alpha subunit</fullName>
        <shortName evidence="1">GlyRS</shortName>
    </alternativeName>
</protein>
<evidence type="ECO:0000255" key="1">
    <source>
        <dbReference type="HAMAP-Rule" id="MF_00254"/>
    </source>
</evidence>
<comment type="catalytic activity">
    <reaction evidence="1">
        <text>tRNA(Gly) + glycine + ATP = glycyl-tRNA(Gly) + AMP + diphosphate</text>
        <dbReference type="Rhea" id="RHEA:16013"/>
        <dbReference type="Rhea" id="RHEA-COMP:9664"/>
        <dbReference type="Rhea" id="RHEA-COMP:9683"/>
        <dbReference type="ChEBI" id="CHEBI:30616"/>
        <dbReference type="ChEBI" id="CHEBI:33019"/>
        <dbReference type="ChEBI" id="CHEBI:57305"/>
        <dbReference type="ChEBI" id="CHEBI:78442"/>
        <dbReference type="ChEBI" id="CHEBI:78522"/>
        <dbReference type="ChEBI" id="CHEBI:456215"/>
        <dbReference type="EC" id="6.1.1.14"/>
    </reaction>
</comment>
<comment type="subunit">
    <text evidence="1">Tetramer of two alpha and two beta subunits.</text>
</comment>
<comment type="subcellular location">
    <subcellularLocation>
        <location evidence="1">Cytoplasm</location>
    </subcellularLocation>
</comment>
<comment type="similarity">
    <text evidence="1">Belongs to the class-II aminoacyl-tRNA synthetase family.</text>
</comment>
<reference key="1">
    <citation type="journal article" date="2001" name="Proc. Natl. Acad. Sci. U.S.A.">
        <title>Complete genome sequence of Caulobacter crescentus.</title>
        <authorList>
            <person name="Nierman W.C."/>
            <person name="Feldblyum T.V."/>
            <person name="Laub M.T."/>
            <person name="Paulsen I.T."/>
            <person name="Nelson K.E."/>
            <person name="Eisen J.A."/>
            <person name="Heidelberg J.F."/>
            <person name="Alley M.R.K."/>
            <person name="Ohta N."/>
            <person name="Maddock J.R."/>
            <person name="Potocka I."/>
            <person name="Nelson W.C."/>
            <person name="Newton A."/>
            <person name="Stephens C."/>
            <person name="Phadke N.D."/>
            <person name="Ely B."/>
            <person name="DeBoy R.T."/>
            <person name="Dodson R.J."/>
            <person name="Durkin A.S."/>
            <person name="Gwinn M.L."/>
            <person name="Haft D.H."/>
            <person name="Kolonay J.F."/>
            <person name="Smit J."/>
            <person name="Craven M.B."/>
            <person name="Khouri H.M."/>
            <person name="Shetty J."/>
            <person name="Berry K.J."/>
            <person name="Utterback T.R."/>
            <person name="Tran K."/>
            <person name="Wolf A.M."/>
            <person name="Vamathevan J.J."/>
            <person name="Ermolaeva M.D."/>
            <person name="White O."/>
            <person name="Salzberg S.L."/>
            <person name="Venter J.C."/>
            <person name="Shapiro L."/>
            <person name="Fraser C.M."/>
        </authorList>
    </citation>
    <scope>NUCLEOTIDE SEQUENCE [LARGE SCALE GENOMIC DNA]</scope>
    <source>
        <strain>ATCC 19089 / CIP 103742 / CB 15</strain>
    </source>
</reference>
<proteinExistence type="inferred from homology"/>
<sequence length="299" mass="33845">MSREKPKSFQSLILTLHDYWSRQGCVILQPHDVEVGAGTLHPATVLRALGPKAWNAAYVQPSRRPGDGRYGENPNRLQHYYQYQVILKPNPENMQDLYLGSLEAIGLDLRTHDIRFVEDDWENPTVGAWGLGWEVWCDGMEVSQYTYFQQVGGLDVNPVAGELTYGLERLAMYVFGVDNVYDLPFNDPDSPLGATTYGDVFLENERQQSEANFHGFDVAVLKQQFEQMEEQVPLMLARSYQDKALVLPAYDMVLKASHLFNLMNARGAIAVAERASYIGRIRDLCKMCASAWVEQQEAA</sequence>
<dbReference type="EC" id="6.1.1.14" evidence="1"/>
<dbReference type="EMBL" id="AE005673">
    <property type="protein sequence ID" value="AAK23322.1"/>
    <property type="molecule type" value="Genomic_DNA"/>
</dbReference>
<dbReference type="PIR" id="F87415">
    <property type="entry name" value="F87415"/>
</dbReference>
<dbReference type="RefSeq" id="NP_420154.1">
    <property type="nucleotide sequence ID" value="NC_002696.2"/>
</dbReference>
<dbReference type="RefSeq" id="WP_010919218.1">
    <property type="nucleotide sequence ID" value="NC_002696.2"/>
</dbReference>
<dbReference type="SMR" id="Q9A8L2"/>
<dbReference type="STRING" id="190650.CC_1341"/>
<dbReference type="EnsemblBacteria" id="AAK23322">
    <property type="protein sequence ID" value="AAK23322"/>
    <property type="gene ID" value="CC_1341"/>
</dbReference>
<dbReference type="KEGG" id="ccr:CC_1341"/>
<dbReference type="PATRIC" id="fig|190650.5.peg.1370"/>
<dbReference type="eggNOG" id="COG0752">
    <property type="taxonomic scope" value="Bacteria"/>
</dbReference>
<dbReference type="HOGENOM" id="CLU_057066_1_0_5"/>
<dbReference type="BioCyc" id="CAULO:CC1341-MONOMER"/>
<dbReference type="Proteomes" id="UP000001816">
    <property type="component" value="Chromosome"/>
</dbReference>
<dbReference type="GO" id="GO:0005829">
    <property type="term" value="C:cytosol"/>
    <property type="evidence" value="ECO:0007669"/>
    <property type="project" value="TreeGrafter"/>
</dbReference>
<dbReference type="GO" id="GO:0005524">
    <property type="term" value="F:ATP binding"/>
    <property type="evidence" value="ECO:0007669"/>
    <property type="project" value="UniProtKB-UniRule"/>
</dbReference>
<dbReference type="GO" id="GO:0004820">
    <property type="term" value="F:glycine-tRNA ligase activity"/>
    <property type="evidence" value="ECO:0007669"/>
    <property type="project" value="UniProtKB-UniRule"/>
</dbReference>
<dbReference type="GO" id="GO:0006426">
    <property type="term" value="P:glycyl-tRNA aminoacylation"/>
    <property type="evidence" value="ECO:0007669"/>
    <property type="project" value="UniProtKB-UniRule"/>
</dbReference>
<dbReference type="FunFam" id="3.30.930.10:FF:000006">
    <property type="entry name" value="Glycine--tRNA ligase alpha subunit"/>
    <property type="match status" value="1"/>
</dbReference>
<dbReference type="Gene3D" id="3.30.930.10">
    <property type="entry name" value="Bira Bifunctional Protein, Domain 2"/>
    <property type="match status" value="1"/>
</dbReference>
<dbReference type="Gene3D" id="1.20.58.180">
    <property type="entry name" value="Class II aaRS and biotin synthetases, domain 2"/>
    <property type="match status" value="1"/>
</dbReference>
<dbReference type="HAMAP" id="MF_00254">
    <property type="entry name" value="Gly_tRNA_synth_alpha"/>
    <property type="match status" value="1"/>
</dbReference>
<dbReference type="InterPro" id="IPR045864">
    <property type="entry name" value="aa-tRNA-synth_II/BPL/LPL"/>
</dbReference>
<dbReference type="InterPro" id="IPR006194">
    <property type="entry name" value="Gly-tRNA-synth_heterodimer"/>
</dbReference>
<dbReference type="InterPro" id="IPR002310">
    <property type="entry name" value="Gly-tRNA_ligase_asu"/>
</dbReference>
<dbReference type="NCBIfam" id="TIGR00388">
    <property type="entry name" value="glyQ"/>
    <property type="match status" value="1"/>
</dbReference>
<dbReference type="NCBIfam" id="NF006827">
    <property type="entry name" value="PRK09348.1"/>
    <property type="match status" value="1"/>
</dbReference>
<dbReference type="PANTHER" id="PTHR30075:SF2">
    <property type="entry name" value="GLYCINE--TRNA LIGASE, CHLOROPLASTIC_MITOCHONDRIAL 2"/>
    <property type="match status" value="1"/>
</dbReference>
<dbReference type="PANTHER" id="PTHR30075">
    <property type="entry name" value="GLYCYL-TRNA SYNTHETASE"/>
    <property type="match status" value="1"/>
</dbReference>
<dbReference type="Pfam" id="PF02091">
    <property type="entry name" value="tRNA-synt_2e"/>
    <property type="match status" value="1"/>
</dbReference>
<dbReference type="PRINTS" id="PR01044">
    <property type="entry name" value="TRNASYNTHGA"/>
</dbReference>
<dbReference type="SUPFAM" id="SSF55681">
    <property type="entry name" value="Class II aaRS and biotin synthetases"/>
    <property type="match status" value="1"/>
</dbReference>
<dbReference type="PROSITE" id="PS50861">
    <property type="entry name" value="AA_TRNA_LIGASE_II_GLYAB"/>
    <property type="match status" value="1"/>
</dbReference>
<accession>Q9A8L2</accession>
<organism>
    <name type="scientific">Caulobacter vibrioides (strain ATCC 19089 / CIP 103742 / CB 15)</name>
    <name type="common">Caulobacter crescentus</name>
    <dbReference type="NCBI Taxonomy" id="190650"/>
    <lineage>
        <taxon>Bacteria</taxon>
        <taxon>Pseudomonadati</taxon>
        <taxon>Pseudomonadota</taxon>
        <taxon>Alphaproteobacteria</taxon>
        <taxon>Caulobacterales</taxon>
        <taxon>Caulobacteraceae</taxon>
        <taxon>Caulobacter</taxon>
    </lineage>
</organism>
<gene>
    <name evidence="1" type="primary">glyQ</name>
    <name type="ordered locus">CC_1341</name>
</gene>